<reference key="1">
    <citation type="journal article" date="2005" name="Genome Res.">
        <title>Sequence, annotation, and analysis of synteny between rice chromosome 3 and diverged grass species.</title>
        <authorList>
            <consortium name="The rice chromosome 3 sequencing consortium"/>
            <person name="Buell C.R."/>
            <person name="Yuan Q."/>
            <person name="Ouyang S."/>
            <person name="Liu J."/>
            <person name="Zhu W."/>
            <person name="Wang A."/>
            <person name="Maiti R."/>
            <person name="Haas B."/>
            <person name="Wortman J."/>
            <person name="Pertea M."/>
            <person name="Jones K.M."/>
            <person name="Kim M."/>
            <person name="Overton L."/>
            <person name="Tsitrin T."/>
            <person name="Fadrosh D."/>
            <person name="Bera J."/>
            <person name="Weaver B."/>
            <person name="Jin S."/>
            <person name="Johri S."/>
            <person name="Reardon M."/>
            <person name="Webb K."/>
            <person name="Hill J."/>
            <person name="Moffat K."/>
            <person name="Tallon L."/>
            <person name="Van Aken S."/>
            <person name="Lewis M."/>
            <person name="Utterback T."/>
            <person name="Feldblyum T."/>
            <person name="Zismann V."/>
            <person name="Iobst S."/>
            <person name="Hsiao J."/>
            <person name="de Vazeille A.R."/>
            <person name="Salzberg S.L."/>
            <person name="White O."/>
            <person name="Fraser C.M."/>
            <person name="Yu Y."/>
            <person name="Kim H."/>
            <person name="Rambo T."/>
            <person name="Currie J."/>
            <person name="Collura K."/>
            <person name="Kernodle-Thompson S."/>
            <person name="Wei F."/>
            <person name="Kudrna K."/>
            <person name="Ammiraju J.S.S."/>
            <person name="Luo M."/>
            <person name="Goicoechea J.L."/>
            <person name="Wing R.A."/>
            <person name="Henry D."/>
            <person name="Oates R."/>
            <person name="Palmer M."/>
            <person name="Pries G."/>
            <person name="Saski C."/>
            <person name="Simmons J."/>
            <person name="Soderlund C."/>
            <person name="Nelson W."/>
            <person name="de la Bastide M."/>
            <person name="Spiegel L."/>
            <person name="Nascimento L."/>
            <person name="Huang E."/>
            <person name="Preston R."/>
            <person name="Zutavern T."/>
            <person name="Palmer L."/>
            <person name="O'Shaughnessy A."/>
            <person name="Dike S."/>
            <person name="McCombie W.R."/>
            <person name="Minx P."/>
            <person name="Cordum H."/>
            <person name="Wilson R."/>
            <person name="Jin W."/>
            <person name="Lee H.R."/>
            <person name="Jiang J."/>
            <person name="Jackson S."/>
        </authorList>
    </citation>
    <scope>NUCLEOTIDE SEQUENCE [LARGE SCALE GENOMIC DNA]</scope>
    <source>
        <strain>cv. Nipponbare</strain>
    </source>
</reference>
<reference key="2">
    <citation type="journal article" date="2005" name="Nature">
        <title>The map-based sequence of the rice genome.</title>
        <authorList>
            <consortium name="International rice genome sequencing project (IRGSP)"/>
        </authorList>
    </citation>
    <scope>NUCLEOTIDE SEQUENCE [LARGE SCALE GENOMIC DNA]</scope>
    <source>
        <strain>cv. Nipponbare</strain>
    </source>
</reference>
<reference key="3">
    <citation type="journal article" date="2013" name="Rice">
        <title>Improvement of the Oryza sativa Nipponbare reference genome using next generation sequence and optical map data.</title>
        <authorList>
            <person name="Kawahara Y."/>
            <person name="de la Bastide M."/>
            <person name="Hamilton J.P."/>
            <person name="Kanamori H."/>
            <person name="McCombie W.R."/>
            <person name="Ouyang S."/>
            <person name="Schwartz D.C."/>
            <person name="Tanaka T."/>
            <person name="Wu J."/>
            <person name="Zhou S."/>
            <person name="Childs K.L."/>
            <person name="Davidson R.M."/>
            <person name="Lin H."/>
            <person name="Quesada-Ocampo L."/>
            <person name="Vaillancourt B."/>
            <person name="Sakai H."/>
            <person name="Lee S.S."/>
            <person name="Kim J."/>
            <person name="Numa H."/>
            <person name="Itoh T."/>
            <person name="Buell C.R."/>
            <person name="Matsumoto T."/>
        </authorList>
    </citation>
    <scope>GENOME REANNOTATION</scope>
    <source>
        <strain>cv. Nipponbare</strain>
    </source>
</reference>
<reference key="4">
    <citation type="journal article" date="2005" name="PLoS Biol.">
        <title>The genomes of Oryza sativa: a history of duplications.</title>
        <authorList>
            <person name="Yu J."/>
            <person name="Wang J."/>
            <person name="Lin W."/>
            <person name="Li S."/>
            <person name="Li H."/>
            <person name="Zhou J."/>
            <person name="Ni P."/>
            <person name="Dong W."/>
            <person name="Hu S."/>
            <person name="Zeng C."/>
            <person name="Zhang J."/>
            <person name="Zhang Y."/>
            <person name="Li R."/>
            <person name="Xu Z."/>
            <person name="Li S."/>
            <person name="Li X."/>
            <person name="Zheng H."/>
            <person name="Cong L."/>
            <person name="Lin L."/>
            <person name="Yin J."/>
            <person name="Geng J."/>
            <person name="Li G."/>
            <person name="Shi J."/>
            <person name="Liu J."/>
            <person name="Lv H."/>
            <person name="Li J."/>
            <person name="Wang J."/>
            <person name="Deng Y."/>
            <person name="Ran L."/>
            <person name="Shi X."/>
            <person name="Wang X."/>
            <person name="Wu Q."/>
            <person name="Li C."/>
            <person name="Ren X."/>
            <person name="Wang J."/>
            <person name="Wang X."/>
            <person name="Li D."/>
            <person name="Liu D."/>
            <person name="Zhang X."/>
            <person name="Ji Z."/>
            <person name="Zhao W."/>
            <person name="Sun Y."/>
            <person name="Zhang Z."/>
            <person name="Bao J."/>
            <person name="Han Y."/>
            <person name="Dong L."/>
            <person name="Ji J."/>
            <person name="Chen P."/>
            <person name="Wu S."/>
            <person name="Liu J."/>
            <person name="Xiao Y."/>
            <person name="Bu D."/>
            <person name="Tan J."/>
            <person name="Yang L."/>
            <person name="Ye C."/>
            <person name="Zhang J."/>
            <person name="Xu J."/>
            <person name="Zhou Y."/>
            <person name="Yu Y."/>
            <person name="Zhang B."/>
            <person name="Zhuang S."/>
            <person name="Wei H."/>
            <person name="Liu B."/>
            <person name="Lei M."/>
            <person name="Yu H."/>
            <person name="Li Y."/>
            <person name="Xu H."/>
            <person name="Wei S."/>
            <person name="He X."/>
            <person name="Fang L."/>
            <person name="Zhang Z."/>
            <person name="Zhang Y."/>
            <person name="Huang X."/>
            <person name="Su Z."/>
            <person name="Tong W."/>
            <person name="Li J."/>
            <person name="Tong Z."/>
            <person name="Li S."/>
            <person name="Ye J."/>
            <person name="Wang L."/>
            <person name="Fang L."/>
            <person name="Lei T."/>
            <person name="Chen C.-S."/>
            <person name="Chen H.-C."/>
            <person name="Xu Z."/>
            <person name="Li H."/>
            <person name="Huang H."/>
            <person name="Zhang F."/>
            <person name="Xu H."/>
            <person name="Li N."/>
            <person name="Zhao C."/>
            <person name="Li S."/>
            <person name="Dong L."/>
            <person name="Huang Y."/>
            <person name="Li L."/>
            <person name="Xi Y."/>
            <person name="Qi Q."/>
            <person name="Li W."/>
            <person name="Zhang B."/>
            <person name="Hu W."/>
            <person name="Zhang Y."/>
            <person name="Tian X."/>
            <person name="Jiao Y."/>
            <person name="Liang X."/>
            <person name="Jin J."/>
            <person name="Gao L."/>
            <person name="Zheng W."/>
            <person name="Hao B."/>
            <person name="Liu S.-M."/>
            <person name="Wang W."/>
            <person name="Yuan L."/>
            <person name="Cao M."/>
            <person name="McDermott J."/>
            <person name="Samudrala R."/>
            <person name="Wang J."/>
            <person name="Wong G.K.-S."/>
            <person name="Yang H."/>
        </authorList>
    </citation>
    <scope>NUCLEOTIDE SEQUENCE [LARGE SCALE GENOMIC DNA]</scope>
    <source>
        <strain>cv. Nipponbare</strain>
    </source>
</reference>
<reference key="5">
    <citation type="journal article" date="2006" name="Plant Physiol.">
        <title>Characterization of the plant-specific BREVIS RADIX gene family reveals limited genetic redundancy despite high sequence conservation.</title>
        <authorList>
            <person name="Briggs G.C."/>
            <person name="Mouchel C.F."/>
            <person name="Hardtke C.S."/>
        </authorList>
    </citation>
    <scope>GENE FAMILY</scope>
</reference>
<sequence>MIQLKDMVMKLSGTSRHHGQQRRGGSPPPRGRTTSVYRSGYYRPGMVQDDMAVPPATYLGGGGTSMSSASSTPAWDFARPAEGEAREWVAQVEPGVQITFVSLAGGGGNDLKRIRFSREMYDKWQAQKWWGENNERIMELYNVRRFSRQVLPTPPRSDDGERESFYSQVGSTRGSPAATPSPAPLTPDRVTSWSAFVRPPSASRQQQQHSFRPLSPPPPSSSNPSERAWQQQQQPQRAGKSPAAASDAMDAARTTSCSSRDEVSISNASELEVTEWVIQDEPGVYITVRELADGTRELRRVRFSRERFAELNAKLWWEENKERIQAQYL</sequence>
<dbReference type="EMBL" id="AC120506">
    <property type="protein sequence ID" value="AAO66543.1"/>
    <property type="molecule type" value="Genomic_DNA"/>
</dbReference>
<dbReference type="EMBL" id="DP000009">
    <property type="protein sequence ID" value="ABF99952.1"/>
    <property type="molecule type" value="Genomic_DNA"/>
</dbReference>
<dbReference type="EMBL" id="AP014959">
    <property type="status" value="NOT_ANNOTATED_CDS"/>
    <property type="molecule type" value="Genomic_DNA"/>
</dbReference>
<dbReference type="EMBL" id="CM000140">
    <property type="protein sequence ID" value="EEE60323.1"/>
    <property type="status" value="ALT_SEQ"/>
    <property type="molecule type" value="Genomic_DNA"/>
</dbReference>
<dbReference type="SMR" id="Q84T65"/>
<dbReference type="FunCoup" id="Q84T65">
    <property type="interactions" value="56"/>
</dbReference>
<dbReference type="PaxDb" id="39947-Q84T65"/>
<dbReference type="eggNOG" id="ENOG502SHZG">
    <property type="taxonomic scope" value="Eukaryota"/>
</dbReference>
<dbReference type="HOGENOM" id="CLU_033380_0_1_1"/>
<dbReference type="InParanoid" id="Q84T65"/>
<dbReference type="Proteomes" id="UP000000763">
    <property type="component" value="Chromosome 3"/>
</dbReference>
<dbReference type="Proteomes" id="UP000007752">
    <property type="component" value="Chromosome 3"/>
</dbReference>
<dbReference type="Proteomes" id="UP000059680">
    <property type="component" value="Chromosome 3"/>
</dbReference>
<dbReference type="GO" id="GO:0005634">
    <property type="term" value="C:nucleus"/>
    <property type="evidence" value="ECO:0007669"/>
    <property type="project" value="UniProtKB-SubCell"/>
</dbReference>
<dbReference type="InterPro" id="IPR013591">
    <property type="entry name" value="Brevis_radix_dom"/>
</dbReference>
<dbReference type="InterPro" id="IPR044532">
    <property type="entry name" value="BRX-like"/>
</dbReference>
<dbReference type="PANTHER" id="PTHR46058">
    <property type="entry name" value="PROTEIN BREVIS RADIX-LIKE 1"/>
    <property type="match status" value="1"/>
</dbReference>
<dbReference type="PANTHER" id="PTHR46058:SF31">
    <property type="entry name" value="PROTEIN BREVIS RADIX-LIKE 4"/>
    <property type="match status" value="1"/>
</dbReference>
<dbReference type="Pfam" id="PF08381">
    <property type="entry name" value="BRX"/>
    <property type="match status" value="2"/>
</dbReference>
<dbReference type="PROSITE" id="PS51514">
    <property type="entry name" value="BRX"/>
    <property type="match status" value="2"/>
</dbReference>
<protein>
    <recommendedName>
        <fullName>Protein Brevis radix-like 4</fullName>
        <shortName>OsBRXL4</shortName>
    </recommendedName>
</protein>
<keyword id="KW-0539">Nucleus</keyword>
<keyword id="KW-1185">Reference proteome</keyword>
<keyword id="KW-0677">Repeat</keyword>
<name>BRXL4_ORYSJ</name>
<evidence type="ECO:0000250" key="1"/>
<evidence type="ECO:0000255" key="2">
    <source>
        <dbReference type="PROSITE-ProRule" id="PRU00847"/>
    </source>
</evidence>
<evidence type="ECO:0000256" key="3">
    <source>
        <dbReference type="SAM" id="MobiDB-lite"/>
    </source>
</evidence>
<evidence type="ECO:0000305" key="4"/>
<proteinExistence type="inferred from homology"/>
<accession>Q84T65</accession>
<accession>B9F7N6</accession>
<comment type="subcellular location">
    <subcellularLocation>
        <location evidence="1">Nucleus</location>
    </subcellularLocation>
</comment>
<comment type="similarity">
    <text evidence="4">Belongs to the BRX family.</text>
</comment>
<comment type="sequence caution" evidence="4">
    <conflict type="erroneous gene model prediction">
        <sequence resource="EMBL-CDS" id="EEE60323"/>
    </conflict>
</comment>
<feature type="chain" id="PRO_0000373829" description="Protein Brevis radix-like 4">
    <location>
        <begin position="1"/>
        <end position="329"/>
    </location>
</feature>
<feature type="domain" description="BRX 1" evidence="2">
    <location>
        <begin position="86"/>
        <end position="142"/>
    </location>
</feature>
<feature type="domain" description="BRX 2" evidence="2">
    <location>
        <begin position="274"/>
        <end position="329"/>
    </location>
</feature>
<feature type="region of interest" description="Disordered" evidence="3">
    <location>
        <begin position="12"/>
        <end position="37"/>
    </location>
</feature>
<feature type="region of interest" description="Disordered" evidence="3">
    <location>
        <begin position="151"/>
        <end position="263"/>
    </location>
</feature>
<feature type="compositionally biased region" description="Low complexity" evidence="3">
    <location>
        <begin position="222"/>
        <end position="236"/>
    </location>
</feature>
<feature type="compositionally biased region" description="Low complexity" evidence="3">
    <location>
        <begin position="243"/>
        <end position="252"/>
    </location>
</feature>
<feature type="compositionally biased region" description="Polar residues" evidence="3">
    <location>
        <begin position="253"/>
        <end position="263"/>
    </location>
</feature>
<organism>
    <name type="scientific">Oryza sativa subsp. japonica</name>
    <name type="common">Rice</name>
    <dbReference type="NCBI Taxonomy" id="39947"/>
    <lineage>
        <taxon>Eukaryota</taxon>
        <taxon>Viridiplantae</taxon>
        <taxon>Streptophyta</taxon>
        <taxon>Embryophyta</taxon>
        <taxon>Tracheophyta</taxon>
        <taxon>Spermatophyta</taxon>
        <taxon>Magnoliopsida</taxon>
        <taxon>Liliopsida</taxon>
        <taxon>Poales</taxon>
        <taxon>Poaceae</taxon>
        <taxon>BOP clade</taxon>
        <taxon>Oryzoideae</taxon>
        <taxon>Oryzeae</taxon>
        <taxon>Oryzinae</taxon>
        <taxon>Oryza</taxon>
        <taxon>Oryza sativa</taxon>
    </lineage>
</organism>
<gene>
    <name type="primary">BRXL4</name>
    <name type="ordered locus">Os03g0853500</name>
    <name type="ordered locus">LOC_Os03g63650</name>
    <name type="ORF">OsJ_13410</name>
</gene>